<gene>
    <name evidence="1" type="primary">ctaG</name>
    <name type="ordered locus">Rpal_0903</name>
</gene>
<protein>
    <recommendedName>
        <fullName evidence="1">Cytochrome c oxidase assembly protein CtaG</fullName>
    </recommendedName>
</protein>
<proteinExistence type="inferred from homology"/>
<reference key="1">
    <citation type="submission" date="2008-05" db="EMBL/GenBank/DDBJ databases">
        <title>Complete sequence of Rhodopseudomonas palustris TIE-1.</title>
        <authorList>
            <consortium name="US DOE Joint Genome Institute"/>
            <person name="Lucas S."/>
            <person name="Copeland A."/>
            <person name="Lapidus A."/>
            <person name="Glavina del Rio T."/>
            <person name="Dalin E."/>
            <person name="Tice H."/>
            <person name="Pitluck S."/>
            <person name="Chain P."/>
            <person name="Malfatti S."/>
            <person name="Shin M."/>
            <person name="Vergez L."/>
            <person name="Lang D."/>
            <person name="Schmutz J."/>
            <person name="Larimer F."/>
            <person name="Land M."/>
            <person name="Hauser L."/>
            <person name="Kyrpides N."/>
            <person name="Mikhailova N."/>
            <person name="Emerson D."/>
            <person name="Newman D.K."/>
            <person name="Roden E."/>
            <person name="Richardson P."/>
        </authorList>
    </citation>
    <scope>NUCLEOTIDE SEQUENCE [LARGE SCALE GENOMIC DNA]</scope>
    <source>
        <strain>TIE-1</strain>
    </source>
</reference>
<evidence type="ECO:0000255" key="1">
    <source>
        <dbReference type="HAMAP-Rule" id="MF_00155"/>
    </source>
</evidence>
<name>COXZ_RHOPT</name>
<feature type="chain" id="PRO_1000096931" description="Cytochrome c oxidase assembly protein CtaG">
    <location>
        <begin position="1"/>
        <end position="208"/>
    </location>
</feature>
<feature type="topological domain" description="Cytoplasmic" evidence="1">
    <location>
        <begin position="1"/>
        <end position="19"/>
    </location>
</feature>
<feature type="transmembrane region" description="Helical; Signal-anchor for type II membrane protein" evidence="1">
    <location>
        <begin position="20"/>
        <end position="42"/>
    </location>
</feature>
<feature type="topological domain" description="Periplasmic" evidence="1">
    <location>
        <begin position="43"/>
        <end position="208"/>
    </location>
</feature>
<organism>
    <name type="scientific">Rhodopseudomonas palustris (strain TIE-1)</name>
    <dbReference type="NCBI Taxonomy" id="395960"/>
    <lineage>
        <taxon>Bacteria</taxon>
        <taxon>Pseudomonadati</taxon>
        <taxon>Pseudomonadota</taxon>
        <taxon>Alphaproteobacteria</taxon>
        <taxon>Hyphomicrobiales</taxon>
        <taxon>Nitrobacteraceae</taxon>
        <taxon>Rhodopseudomonas</taxon>
    </lineage>
</organism>
<keyword id="KW-0997">Cell inner membrane</keyword>
<keyword id="KW-1003">Cell membrane</keyword>
<keyword id="KW-0186">Copper</keyword>
<keyword id="KW-0472">Membrane</keyword>
<keyword id="KW-0735">Signal-anchor</keyword>
<keyword id="KW-0812">Transmembrane</keyword>
<keyword id="KW-1133">Transmembrane helix</keyword>
<comment type="function">
    <text evidence="1">Exerts its effect at some terminal stage of cytochrome c oxidase synthesis, probably by being involved in the insertion of the copper B into subunit I.</text>
</comment>
<comment type="subcellular location">
    <subcellularLocation>
        <location evidence="1">Cell inner membrane</location>
        <topology evidence="1">Single-pass type II membrane protein</topology>
        <orientation evidence="1">Periplasmic side</orientation>
    </subcellularLocation>
</comment>
<comment type="similarity">
    <text evidence="1">Belongs to the COX11/CtaG family.</text>
</comment>
<dbReference type="EMBL" id="CP001096">
    <property type="protein sequence ID" value="ACE99460.1"/>
    <property type="molecule type" value="Genomic_DNA"/>
</dbReference>
<dbReference type="RefSeq" id="WP_012494517.1">
    <property type="nucleotide sequence ID" value="NC_011004.1"/>
</dbReference>
<dbReference type="SMR" id="B3QF26"/>
<dbReference type="KEGG" id="rpt:Rpal_0903"/>
<dbReference type="HOGENOM" id="CLU_045000_5_0_5"/>
<dbReference type="OrthoDB" id="9804841at2"/>
<dbReference type="Proteomes" id="UP000001725">
    <property type="component" value="Chromosome"/>
</dbReference>
<dbReference type="GO" id="GO:0005886">
    <property type="term" value="C:plasma membrane"/>
    <property type="evidence" value="ECO:0007669"/>
    <property type="project" value="UniProtKB-SubCell"/>
</dbReference>
<dbReference type="GO" id="GO:0005507">
    <property type="term" value="F:copper ion binding"/>
    <property type="evidence" value="ECO:0007669"/>
    <property type="project" value="InterPro"/>
</dbReference>
<dbReference type="GO" id="GO:0008535">
    <property type="term" value="P:respiratory chain complex IV assembly"/>
    <property type="evidence" value="ECO:0007669"/>
    <property type="project" value="UniProtKB-UniRule"/>
</dbReference>
<dbReference type="FunFam" id="2.60.370.10:FF:000001">
    <property type="entry name" value="COX11 cytochrome c oxidase assembly homolog"/>
    <property type="match status" value="1"/>
</dbReference>
<dbReference type="Gene3D" id="2.60.370.10">
    <property type="entry name" value="Ctag/Cox11"/>
    <property type="match status" value="1"/>
</dbReference>
<dbReference type="HAMAP" id="MF_00155">
    <property type="entry name" value="CtaG"/>
    <property type="match status" value="1"/>
</dbReference>
<dbReference type="InterPro" id="IPR023471">
    <property type="entry name" value="CtaG/Cox11_dom_sf"/>
</dbReference>
<dbReference type="InterPro" id="IPR007533">
    <property type="entry name" value="Cyt_c_oxidase_assmbl_CtaG"/>
</dbReference>
<dbReference type="NCBIfam" id="NF003465">
    <property type="entry name" value="PRK05089.1"/>
    <property type="match status" value="1"/>
</dbReference>
<dbReference type="PANTHER" id="PTHR21320:SF3">
    <property type="entry name" value="CYTOCHROME C OXIDASE ASSEMBLY PROTEIN COX11, MITOCHONDRIAL-RELATED"/>
    <property type="match status" value="1"/>
</dbReference>
<dbReference type="PANTHER" id="PTHR21320">
    <property type="entry name" value="CYTOCHROME C OXIDASE ASSEMBLY PROTEIN COX11-RELATED"/>
    <property type="match status" value="1"/>
</dbReference>
<dbReference type="Pfam" id="PF04442">
    <property type="entry name" value="CtaG_Cox11"/>
    <property type="match status" value="1"/>
</dbReference>
<dbReference type="PIRSF" id="PIRSF005413">
    <property type="entry name" value="COX11"/>
    <property type="match status" value="1"/>
</dbReference>
<dbReference type="SUPFAM" id="SSF110111">
    <property type="entry name" value="Ctag/Cox11"/>
    <property type="match status" value="1"/>
</dbReference>
<accession>B3QF26</accession>
<sequence length="208" mass="22510">MSPPLPQAPQQPAPRRGLGHDTAVAAVCGLVVALMVGASFAAVPFYNWFCRTTGFNGTTQVAHAVPSSAPLDRTVTVSFDSNVNGLPWKFEPEQREIEVPIGKVVTVYYRITNLSRSDTVGQAAYNVTPLTVGSYFTKINCFCFTEQPLAAGESRDMPVVFYIDPAFAADSENDTVKTITLSYTYYPVRDPAPKPVASSEPAPRKGNL</sequence>